<accession>B1VF43</accession>
<reference key="1">
    <citation type="journal article" date="2008" name="J. Biotechnol.">
        <title>The lifestyle of Corynebacterium urealyticum derived from its complete genome sequence established by pyrosequencing.</title>
        <authorList>
            <person name="Tauch A."/>
            <person name="Trost E."/>
            <person name="Tilker A."/>
            <person name="Ludewig U."/>
            <person name="Schneiker S."/>
            <person name="Goesmann A."/>
            <person name="Arnold W."/>
            <person name="Bekel T."/>
            <person name="Brinkrolf K."/>
            <person name="Brune I."/>
            <person name="Goetker S."/>
            <person name="Kalinowski J."/>
            <person name="Kamp P.-B."/>
            <person name="Lobo F.P."/>
            <person name="Viehoever P."/>
            <person name="Weisshaar B."/>
            <person name="Soriano F."/>
            <person name="Droege M."/>
            <person name="Puehler A."/>
        </authorList>
    </citation>
    <scope>NUCLEOTIDE SEQUENCE [LARGE SCALE GENOMIC DNA]</scope>
    <source>
        <strain>ATCC 43042 / DSM 7109</strain>
    </source>
</reference>
<proteinExistence type="inferred from homology"/>
<organism>
    <name type="scientific">Corynebacterium urealyticum (strain ATCC 43042 / DSM 7109)</name>
    <dbReference type="NCBI Taxonomy" id="504474"/>
    <lineage>
        <taxon>Bacteria</taxon>
        <taxon>Bacillati</taxon>
        <taxon>Actinomycetota</taxon>
        <taxon>Actinomycetes</taxon>
        <taxon>Mycobacteriales</taxon>
        <taxon>Corynebacteriaceae</taxon>
        <taxon>Corynebacterium</taxon>
    </lineage>
</organism>
<evidence type="ECO:0000255" key="1">
    <source>
        <dbReference type="HAMAP-Rule" id="MF_00296"/>
    </source>
</evidence>
<comment type="function">
    <text evidence="1">Transfers an acetyl group from acetyl-CoA to L-homoserine, forming acetyl-L-homoserine.</text>
</comment>
<comment type="catalytic activity">
    <reaction evidence="1">
        <text>L-homoserine + acetyl-CoA = O-acetyl-L-homoserine + CoA</text>
        <dbReference type="Rhea" id="RHEA:13701"/>
        <dbReference type="ChEBI" id="CHEBI:57287"/>
        <dbReference type="ChEBI" id="CHEBI:57288"/>
        <dbReference type="ChEBI" id="CHEBI:57476"/>
        <dbReference type="ChEBI" id="CHEBI:57716"/>
        <dbReference type="EC" id="2.3.1.31"/>
    </reaction>
</comment>
<comment type="pathway">
    <text evidence="1">Amino-acid biosynthesis; L-methionine biosynthesis via de novo pathway; O-acetyl-L-homoserine from L-homoserine: step 1/1.</text>
</comment>
<comment type="subunit">
    <text evidence="1">Homodimer.</text>
</comment>
<comment type="subcellular location">
    <subcellularLocation>
        <location evidence="1">Cytoplasm</location>
    </subcellularLocation>
</comment>
<comment type="similarity">
    <text evidence="1">Belongs to the AB hydrolase superfamily. MetX family.</text>
</comment>
<name>METXA_CORU7</name>
<dbReference type="EC" id="2.3.1.31" evidence="1"/>
<dbReference type="EMBL" id="AM942444">
    <property type="protein sequence ID" value="CAQ04382.1"/>
    <property type="molecule type" value="Genomic_DNA"/>
</dbReference>
<dbReference type="RefSeq" id="WP_012359675.1">
    <property type="nucleotide sequence ID" value="NC_010545.1"/>
</dbReference>
<dbReference type="SMR" id="B1VF43"/>
<dbReference type="STRING" id="504474.cu0422"/>
<dbReference type="ESTHER" id="coru7-metx">
    <property type="family name" value="Homoserine_transacetylase"/>
</dbReference>
<dbReference type="GeneID" id="60605223"/>
<dbReference type="KEGG" id="cur:cu0422"/>
<dbReference type="eggNOG" id="COG2021">
    <property type="taxonomic scope" value="Bacteria"/>
</dbReference>
<dbReference type="HOGENOM" id="CLU_028760_1_0_11"/>
<dbReference type="UniPathway" id="UPA00051">
    <property type="reaction ID" value="UER00074"/>
</dbReference>
<dbReference type="Proteomes" id="UP000001727">
    <property type="component" value="Chromosome"/>
</dbReference>
<dbReference type="GO" id="GO:0005737">
    <property type="term" value="C:cytoplasm"/>
    <property type="evidence" value="ECO:0007669"/>
    <property type="project" value="UniProtKB-SubCell"/>
</dbReference>
<dbReference type="GO" id="GO:0004414">
    <property type="term" value="F:homoserine O-acetyltransferase activity"/>
    <property type="evidence" value="ECO:0007669"/>
    <property type="project" value="UniProtKB-UniRule"/>
</dbReference>
<dbReference type="GO" id="GO:0009092">
    <property type="term" value="P:homoserine metabolic process"/>
    <property type="evidence" value="ECO:0007669"/>
    <property type="project" value="TreeGrafter"/>
</dbReference>
<dbReference type="GO" id="GO:0009086">
    <property type="term" value="P:methionine biosynthetic process"/>
    <property type="evidence" value="ECO:0007669"/>
    <property type="project" value="UniProtKB-UniRule"/>
</dbReference>
<dbReference type="Gene3D" id="3.40.50.1820">
    <property type="entry name" value="alpha/beta hydrolase"/>
    <property type="match status" value="1"/>
</dbReference>
<dbReference type="HAMAP" id="MF_00296">
    <property type="entry name" value="MetX_acyltransf"/>
    <property type="match status" value="1"/>
</dbReference>
<dbReference type="InterPro" id="IPR000073">
    <property type="entry name" value="AB_hydrolase_1"/>
</dbReference>
<dbReference type="InterPro" id="IPR029058">
    <property type="entry name" value="AB_hydrolase_fold"/>
</dbReference>
<dbReference type="InterPro" id="IPR008220">
    <property type="entry name" value="HAT_MetX-like"/>
</dbReference>
<dbReference type="NCBIfam" id="TIGR01392">
    <property type="entry name" value="homoserO_Ac_trn"/>
    <property type="match status" value="1"/>
</dbReference>
<dbReference type="NCBIfam" id="NF001209">
    <property type="entry name" value="PRK00175.1"/>
    <property type="match status" value="1"/>
</dbReference>
<dbReference type="PANTHER" id="PTHR32268">
    <property type="entry name" value="HOMOSERINE O-ACETYLTRANSFERASE"/>
    <property type="match status" value="1"/>
</dbReference>
<dbReference type="PANTHER" id="PTHR32268:SF11">
    <property type="entry name" value="HOMOSERINE O-ACETYLTRANSFERASE"/>
    <property type="match status" value="1"/>
</dbReference>
<dbReference type="Pfam" id="PF00561">
    <property type="entry name" value="Abhydrolase_1"/>
    <property type="match status" value="1"/>
</dbReference>
<dbReference type="PIRSF" id="PIRSF000443">
    <property type="entry name" value="Homoser_Ac_trans"/>
    <property type="match status" value="1"/>
</dbReference>
<dbReference type="SUPFAM" id="SSF53474">
    <property type="entry name" value="alpha/beta-Hydrolases"/>
    <property type="match status" value="1"/>
</dbReference>
<protein>
    <recommendedName>
        <fullName evidence="1">Homoserine O-acetyltransferase</fullName>
        <shortName evidence="1">HAT</shortName>
        <ecNumber evidence="1">2.3.1.31</ecNumber>
    </recommendedName>
    <alternativeName>
        <fullName evidence="1">Homoserine transacetylase</fullName>
        <shortName evidence="1">HTA</shortName>
    </alternativeName>
</protein>
<sequence>MRSDLLPASGTYADIPIGEVLTEAGASIPETSLRLYAFYDAAEQAAVPTPPEERPIVLIEHALTGDGNAADWWADMVGVGKPIDTAKYLVLCANALGGCAGSTGPSSLHPEGGFWGSRFPGLSIRDLVQAEKQLLDVLEIPRVHVIIGASMGGARTLEWSLLYPEMMDAILPIAVSARASAWQIGIQSAQIRVIEADPLWHGGDYYEAGMGPVWGLGEARRIAHLTYRGELEVDERFGAEPQQGENPLGKFRSPDQRFSVEGYLDRQAMKLRNRFDAGSYVTLTDALNRHDLGRDRGGMNAALGNSTVPTMVCGIDTDILYPYHQQEHLSRNLGTFLGLSQITSPTGHDGFLIEARQMGNVLEKFLVTAEKLAKDPEQRANILQQHHH</sequence>
<keyword id="KW-0012">Acyltransferase</keyword>
<keyword id="KW-0028">Amino-acid biosynthesis</keyword>
<keyword id="KW-0963">Cytoplasm</keyword>
<keyword id="KW-0486">Methionine biosynthesis</keyword>
<keyword id="KW-1185">Reference proteome</keyword>
<keyword id="KW-0808">Transferase</keyword>
<feature type="chain" id="PRO_1000115221" description="Homoserine O-acetyltransferase">
    <location>
        <begin position="1"/>
        <end position="388"/>
    </location>
</feature>
<feature type="domain" description="AB hydrolase-1" evidence="1">
    <location>
        <begin position="55"/>
        <end position="354"/>
    </location>
</feature>
<feature type="active site" description="Nucleophile" evidence="1">
    <location>
        <position position="150"/>
    </location>
</feature>
<feature type="active site" evidence="1">
    <location>
        <position position="318"/>
    </location>
</feature>
<feature type="active site" evidence="1">
    <location>
        <position position="348"/>
    </location>
</feature>
<feature type="binding site" evidence="1">
    <location>
        <position position="220"/>
    </location>
    <ligand>
        <name>substrate</name>
    </ligand>
</feature>
<feature type="binding site" evidence="1">
    <location>
        <position position="349"/>
    </location>
    <ligand>
        <name>substrate</name>
    </ligand>
</feature>
<gene>
    <name evidence="1" type="primary">metXA</name>
    <name type="ordered locus">cu0422</name>
</gene>